<organism>
    <name type="scientific">Thermomicrobium roseum (strain ATCC 27502 / DSM 5159 / P-2)</name>
    <dbReference type="NCBI Taxonomy" id="309801"/>
    <lineage>
        <taxon>Bacteria</taxon>
        <taxon>Pseudomonadati</taxon>
        <taxon>Thermomicrobiota</taxon>
        <taxon>Thermomicrobia</taxon>
        <taxon>Thermomicrobiales</taxon>
        <taxon>Thermomicrobiaceae</taxon>
        <taxon>Thermomicrobium</taxon>
    </lineage>
</organism>
<protein>
    <recommendedName>
        <fullName evidence="1">Phosphoribosylformylglycinamidine synthase subunit PurQ</fullName>
        <shortName evidence="1">FGAM synthase</shortName>
        <ecNumber evidence="1">6.3.5.3</ecNumber>
    </recommendedName>
    <alternativeName>
        <fullName evidence="1">Formylglycinamide ribonucleotide amidotransferase subunit I</fullName>
        <shortName evidence="1">FGAR amidotransferase I</shortName>
        <shortName evidence="1">FGAR-AT I</shortName>
    </alternativeName>
    <alternativeName>
        <fullName evidence="1">Glutaminase PurQ</fullName>
        <ecNumber evidence="1">3.5.1.2</ecNumber>
    </alternativeName>
    <alternativeName>
        <fullName evidence="1">Phosphoribosylformylglycinamidine synthase subunit I</fullName>
    </alternativeName>
</protein>
<name>PURQ_THERP</name>
<sequence>MRFAVVTFPGSNGDHDALMAIRLGLGHAAELVWYTETDLSRFDCIIIPGGFSYGDYLRAGALARFAPVMSAVAREAEAGKPILGICNGFQILTEARLLPGALLRNASLEFVCDWVWVRVEQTRTPWTSQLAPGTLLRLPIAHGEGRYYVEAEELVALETNGQVVFRYVDADGLPTADANPNGSVANIAGVCNERGNVVGLMPHPERAYDRFVGGDDGLRILASVLSVGLEVAHSPR</sequence>
<keyword id="KW-0067">ATP-binding</keyword>
<keyword id="KW-0963">Cytoplasm</keyword>
<keyword id="KW-0315">Glutamine amidotransferase</keyword>
<keyword id="KW-0378">Hydrolase</keyword>
<keyword id="KW-0436">Ligase</keyword>
<keyword id="KW-0547">Nucleotide-binding</keyword>
<keyword id="KW-0658">Purine biosynthesis</keyword>
<keyword id="KW-1185">Reference proteome</keyword>
<feature type="chain" id="PRO_1000134916" description="Phosphoribosylformylglycinamidine synthase subunit PurQ">
    <location>
        <begin position="1"/>
        <end position="236"/>
    </location>
</feature>
<feature type="domain" description="Glutamine amidotransferase type-1" evidence="1">
    <location>
        <begin position="2"/>
        <end position="234"/>
    </location>
</feature>
<feature type="active site" description="Nucleophile" evidence="1">
    <location>
        <position position="86"/>
    </location>
</feature>
<feature type="active site" evidence="1">
    <location>
        <position position="203"/>
    </location>
</feature>
<feature type="active site" evidence="1">
    <location>
        <position position="205"/>
    </location>
</feature>
<comment type="function">
    <text evidence="1">Part of the phosphoribosylformylglycinamidine synthase complex involved in the purines biosynthetic pathway. Catalyzes the ATP-dependent conversion of formylglycinamide ribonucleotide (FGAR) and glutamine to yield formylglycinamidine ribonucleotide (FGAM) and glutamate. The FGAM synthase complex is composed of three subunits. PurQ produces an ammonia molecule by converting glutamine to glutamate. PurL transfers the ammonia molecule to FGAR to form FGAM in an ATP-dependent manner. PurS interacts with PurQ and PurL and is thought to assist in the transfer of the ammonia molecule from PurQ to PurL.</text>
</comment>
<comment type="catalytic activity">
    <reaction evidence="1">
        <text>N(2)-formyl-N(1)-(5-phospho-beta-D-ribosyl)glycinamide + L-glutamine + ATP + H2O = 2-formamido-N(1)-(5-O-phospho-beta-D-ribosyl)acetamidine + L-glutamate + ADP + phosphate + H(+)</text>
        <dbReference type="Rhea" id="RHEA:17129"/>
        <dbReference type="ChEBI" id="CHEBI:15377"/>
        <dbReference type="ChEBI" id="CHEBI:15378"/>
        <dbReference type="ChEBI" id="CHEBI:29985"/>
        <dbReference type="ChEBI" id="CHEBI:30616"/>
        <dbReference type="ChEBI" id="CHEBI:43474"/>
        <dbReference type="ChEBI" id="CHEBI:58359"/>
        <dbReference type="ChEBI" id="CHEBI:147286"/>
        <dbReference type="ChEBI" id="CHEBI:147287"/>
        <dbReference type="ChEBI" id="CHEBI:456216"/>
        <dbReference type="EC" id="6.3.5.3"/>
    </reaction>
</comment>
<comment type="catalytic activity">
    <reaction evidence="1">
        <text>L-glutamine + H2O = L-glutamate + NH4(+)</text>
        <dbReference type="Rhea" id="RHEA:15889"/>
        <dbReference type="ChEBI" id="CHEBI:15377"/>
        <dbReference type="ChEBI" id="CHEBI:28938"/>
        <dbReference type="ChEBI" id="CHEBI:29985"/>
        <dbReference type="ChEBI" id="CHEBI:58359"/>
        <dbReference type="EC" id="3.5.1.2"/>
    </reaction>
</comment>
<comment type="pathway">
    <text evidence="1">Purine metabolism; IMP biosynthesis via de novo pathway; 5-amino-1-(5-phospho-D-ribosyl)imidazole from N(2)-formyl-N(1)-(5-phospho-D-ribosyl)glycinamide: step 1/2.</text>
</comment>
<comment type="subunit">
    <text evidence="1">Part of the FGAM synthase complex composed of 1 PurL, 1 PurQ and 2 PurS subunits.</text>
</comment>
<comment type="subcellular location">
    <subcellularLocation>
        <location evidence="1">Cytoplasm</location>
    </subcellularLocation>
</comment>
<gene>
    <name evidence="1" type="primary">purQ</name>
    <name type="ordered locus">trd_0748</name>
</gene>
<reference key="1">
    <citation type="journal article" date="2009" name="PLoS ONE">
        <title>Complete genome sequence of the aerobic CO-oxidizing thermophile Thermomicrobium roseum.</title>
        <authorList>
            <person name="Wu D."/>
            <person name="Raymond J."/>
            <person name="Wu M."/>
            <person name="Chatterji S."/>
            <person name="Ren Q."/>
            <person name="Graham J.E."/>
            <person name="Bryant D.A."/>
            <person name="Robb F."/>
            <person name="Colman A."/>
            <person name="Tallon L.J."/>
            <person name="Badger J.H."/>
            <person name="Madupu R."/>
            <person name="Ward N.L."/>
            <person name="Eisen J.A."/>
        </authorList>
    </citation>
    <scope>NUCLEOTIDE SEQUENCE [LARGE SCALE GENOMIC DNA]</scope>
    <source>
        <strain>ATCC 27502 / DSM 5159 / P-2</strain>
    </source>
</reference>
<dbReference type="EC" id="6.3.5.3" evidence="1"/>
<dbReference type="EC" id="3.5.1.2" evidence="1"/>
<dbReference type="EMBL" id="CP001275">
    <property type="protein sequence ID" value="ACM05040.1"/>
    <property type="molecule type" value="Genomic_DNA"/>
</dbReference>
<dbReference type="RefSeq" id="WP_012642136.1">
    <property type="nucleotide sequence ID" value="NC_011959.1"/>
</dbReference>
<dbReference type="SMR" id="B9KZ37"/>
<dbReference type="STRING" id="309801.trd_0748"/>
<dbReference type="KEGG" id="tro:trd_0748"/>
<dbReference type="eggNOG" id="COG0047">
    <property type="taxonomic scope" value="Bacteria"/>
</dbReference>
<dbReference type="HOGENOM" id="CLU_001031_3_1_0"/>
<dbReference type="OrthoDB" id="9804441at2"/>
<dbReference type="UniPathway" id="UPA00074">
    <property type="reaction ID" value="UER00128"/>
</dbReference>
<dbReference type="Proteomes" id="UP000000447">
    <property type="component" value="Chromosome"/>
</dbReference>
<dbReference type="GO" id="GO:0005737">
    <property type="term" value="C:cytoplasm"/>
    <property type="evidence" value="ECO:0007669"/>
    <property type="project" value="UniProtKB-SubCell"/>
</dbReference>
<dbReference type="GO" id="GO:0005524">
    <property type="term" value="F:ATP binding"/>
    <property type="evidence" value="ECO:0007669"/>
    <property type="project" value="UniProtKB-KW"/>
</dbReference>
<dbReference type="GO" id="GO:0004359">
    <property type="term" value="F:glutaminase activity"/>
    <property type="evidence" value="ECO:0007669"/>
    <property type="project" value="UniProtKB-EC"/>
</dbReference>
<dbReference type="GO" id="GO:0004642">
    <property type="term" value="F:phosphoribosylformylglycinamidine synthase activity"/>
    <property type="evidence" value="ECO:0007669"/>
    <property type="project" value="UniProtKB-UniRule"/>
</dbReference>
<dbReference type="GO" id="GO:0006189">
    <property type="term" value="P:'de novo' IMP biosynthetic process"/>
    <property type="evidence" value="ECO:0007669"/>
    <property type="project" value="UniProtKB-UniRule"/>
</dbReference>
<dbReference type="CDD" id="cd01740">
    <property type="entry name" value="GATase1_FGAR_AT"/>
    <property type="match status" value="1"/>
</dbReference>
<dbReference type="Gene3D" id="3.40.50.880">
    <property type="match status" value="1"/>
</dbReference>
<dbReference type="HAMAP" id="MF_00421">
    <property type="entry name" value="PurQ"/>
    <property type="match status" value="1"/>
</dbReference>
<dbReference type="InterPro" id="IPR029062">
    <property type="entry name" value="Class_I_gatase-like"/>
</dbReference>
<dbReference type="InterPro" id="IPR010075">
    <property type="entry name" value="PRibForGlyAmidine_synth_PurQ"/>
</dbReference>
<dbReference type="NCBIfam" id="TIGR01737">
    <property type="entry name" value="FGAM_synth_I"/>
    <property type="match status" value="1"/>
</dbReference>
<dbReference type="NCBIfam" id="NF002957">
    <property type="entry name" value="PRK03619.1"/>
    <property type="match status" value="1"/>
</dbReference>
<dbReference type="PANTHER" id="PTHR47552">
    <property type="entry name" value="PHOSPHORIBOSYLFORMYLGLYCINAMIDINE SYNTHASE SUBUNIT PURQ"/>
    <property type="match status" value="1"/>
</dbReference>
<dbReference type="PANTHER" id="PTHR47552:SF1">
    <property type="entry name" value="PHOSPHORIBOSYLFORMYLGLYCINAMIDINE SYNTHASE SUBUNIT PURQ"/>
    <property type="match status" value="1"/>
</dbReference>
<dbReference type="Pfam" id="PF13507">
    <property type="entry name" value="GATase_5"/>
    <property type="match status" value="1"/>
</dbReference>
<dbReference type="PIRSF" id="PIRSF001586">
    <property type="entry name" value="FGAM_synth_I"/>
    <property type="match status" value="1"/>
</dbReference>
<dbReference type="SMART" id="SM01211">
    <property type="entry name" value="GATase_5"/>
    <property type="match status" value="1"/>
</dbReference>
<dbReference type="SUPFAM" id="SSF52317">
    <property type="entry name" value="Class I glutamine amidotransferase-like"/>
    <property type="match status" value="1"/>
</dbReference>
<dbReference type="PROSITE" id="PS51273">
    <property type="entry name" value="GATASE_TYPE_1"/>
    <property type="match status" value="1"/>
</dbReference>
<proteinExistence type="inferred from homology"/>
<accession>B9KZ37</accession>
<evidence type="ECO:0000255" key="1">
    <source>
        <dbReference type="HAMAP-Rule" id="MF_00421"/>
    </source>
</evidence>